<keyword id="KW-0963">Cytoplasm</keyword>
<keyword id="KW-0238">DNA-binding</keyword>
<keyword id="KW-1185">Reference proteome</keyword>
<keyword id="KW-0804">Transcription</keyword>
<keyword id="KW-0805">Transcription regulation</keyword>
<name>Y1132_THERP</name>
<feature type="chain" id="PRO_1000200117" description="Probable transcriptional regulatory protein trd_1132">
    <location>
        <begin position="1"/>
        <end position="248"/>
    </location>
</feature>
<sequence length="248" mass="26711">MAGHSKWAQIKRQKQAADFRKGQIFSKLAREIHVAVREGGPNPETNVRLRMAIERARREGMPKDTIENAIAKASGAAGGAAEYETIVYEGYGPGGVAIMAIALTDNRNRTASVVRHIFSKYGGSLGETGSVAWQFETVGQIVVATDGHDPEEIALAAIDAGARDFEVEDDSVIITTDPDQLSDVAEKLEAAGYQIRQADIQRIPTTTVELEGGQAQSALKLLEALEDLDDVQEVYTNASFPAEVRSAV</sequence>
<dbReference type="EMBL" id="CP001275">
    <property type="protein sequence ID" value="ACM05169.1"/>
    <property type="molecule type" value="Genomic_DNA"/>
</dbReference>
<dbReference type="RefSeq" id="WP_015922085.1">
    <property type="nucleotide sequence ID" value="NC_011959.1"/>
</dbReference>
<dbReference type="SMR" id="B9L0R1"/>
<dbReference type="STRING" id="309801.trd_1132"/>
<dbReference type="KEGG" id="tro:trd_1132"/>
<dbReference type="eggNOG" id="COG0217">
    <property type="taxonomic scope" value="Bacteria"/>
</dbReference>
<dbReference type="HOGENOM" id="CLU_062974_2_2_0"/>
<dbReference type="OrthoDB" id="9781053at2"/>
<dbReference type="Proteomes" id="UP000000447">
    <property type="component" value="Chromosome"/>
</dbReference>
<dbReference type="GO" id="GO:0005829">
    <property type="term" value="C:cytosol"/>
    <property type="evidence" value="ECO:0007669"/>
    <property type="project" value="TreeGrafter"/>
</dbReference>
<dbReference type="GO" id="GO:0003677">
    <property type="term" value="F:DNA binding"/>
    <property type="evidence" value="ECO:0007669"/>
    <property type="project" value="UniProtKB-UniRule"/>
</dbReference>
<dbReference type="GO" id="GO:0006355">
    <property type="term" value="P:regulation of DNA-templated transcription"/>
    <property type="evidence" value="ECO:0007669"/>
    <property type="project" value="UniProtKB-UniRule"/>
</dbReference>
<dbReference type="FunFam" id="1.10.10.200:FF:000002">
    <property type="entry name" value="Probable transcriptional regulatory protein CLM62_37755"/>
    <property type="match status" value="1"/>
</dbReference>
<dbReference type="Gene3D" id="1.10.10.200">
    <property type="match status" value="1"/>
</dbReference>
<dbReference type="Gene3D" id="3.30.70.980">
    <property type="match status" value="2"/>
</dbReference>
<dbReference type="HAMAP" id="MF_00693">
    <property type="entry name" value="Transcrip_reg_TACO1"/>
    <property type="match status" value="1"/>
</dbReference>
<dbReference type="InterPro" id="IPR017856">
    <property type="entry name" value="Integrase-like_N"/>
</dbReference>
<dbReference type="InterPro" id="IPR048300">
    <property type="entry name" value="TACO1_YebC-like_2nd/3rd_dom"/>
</dbReference>
<dbReference type="InterPro" id="IPR049083">
    <property type="entry name" value="TACO1_YebC_N"/>
</dbReference>
<dbReference type="InterPro" id="IPR002876">
    <property type="entry name" value="Transcrip_reg_TACO1-like"/>
</dbReference>
<dbReference type="InterPro" id="IPR026564">
    <property type="entry name" value="Transcrip_reg_TACO1-like_dom3"/>
</dbReference>
<dbReference type="InterPro" id="IPR029072">
    <property type="entry name" value="YebC-like"/>
</dbReference>
<dbReference type="NCBIfam" id="NF001030">
    <property type="entry name" value="PRK00110.1"/>
    <property type="match status" value="1"/>
</dbReference>
<dbReference type="NCBIfam" id="NF009044">
    <property type="entry name" value="PRK12378.1"/>
    <property type="match status" value="1"/>
</dbReference>
<dbReference type="NCBIfam" id="TIGR01033">
    <property type="entry name" value="YebC/PmpR family DNA-binding transcriptional regulator"/>
    <property type="match status" value="1"/>
</dbReference>
<dbReference type="PANTHER" id="PTHR12532:SF6">
    <property type="entry name" value="TRANSCRIPTIONAL REGULATORY PROTEIN YEBC-RELATED"/>
    <property type="match status" value="1"/>
</dbReference>
<dbReference type="PANTHER" id="PTHR12532">
    <property type="entry name" value="TRANSLATIONAL ACTIVATOR OF CYTOCHROME C OXIDASE 1"/>
    <property type="match status" value="1"/>
</dbReference>
<dbReference type="Pfam" id="PF20772">
    <property type="entry name" value="TACO1_YebC_N"/>
    <property type="match status" value="1"/>
</dbReference>
<dbReference type="Pfam" id="PF01709">
    <property type="entry name" value="Transcrip_reg"/>
    <property type="match status" value="1"/>
</dbReference>
<dbReference type="SUPFAM" id="SSF75625">
    <property type="entry name" value="YebC-like"/>
    <property type="match status" value="1"/>
</dbReference>
<comment type="subcellular location">
    <subcellularLocation>
        <location evidence="1">Cytoplasm</location>
    </subcellularLocation>
</comment>
<comment type="similarity">
    <text evidence="1">Belongs to the TACO1 family.</text>
</comment>
<proteinExistence type="inferred from homology"/>
<accession>B9L0R1</accession>
<reference key="1">
    <citation type="journal article" date="2009" name="PLoS ONE">
        <title>Complete genome sequence of the aerobic CO-oxidizing thermophile Thermomicrobium roseum.</title>
        <authorList>
            <person name="Wu D."/>
            <person name="Raymond J."/>
            <person name="Wu M."/>
            <person name="Chatterji S."/>
            <person name="Ren Q."/>
            <person name="Graham J.E."/>
            <person name="Bryant D.A."/>
            <person name="Robb F."/>
            <person name="Colman A."/>
            <person name="Tallon L.J."/>
            <person name="Badger J.H."/>
            <person name="Madupu R."/>
            <person name="Ward N.L."/>
            <person name="Eisen J.A."/>
        </authorList>
    </citation>
    <scope>NUCLEOTIDE SEQUENCE [LARGE SCALE GENOMIC DNA]</scope>
    <source>
        <strain>ATCC 27502 / DSM 5159 / P-2</strain>
    </source>
</reference>
<gene>
    <name type="ordered locus">trd_1132</name>
</gene>
<protein>
    <recommendedName>
        <fullName evidence="1">Probable transcriptional regulatory protein trd_1132</fullName>
    </recommendedName>
</protein>
<evidence type="ECO:0000255" key="1">
    <source>
        <dbReference type="HAMAP-Rule" id="MF_00693"/>
    </source>
</evidence>
<organism>
    <name type="scientific">Thermomicrobium roseum (strain ATCC 27502 / DSM 5159 / P-2)</name>
    <dbReference type="NCBI Taxonomy" id="309801"/>
    <lineage>
        <taxon>Bacteria</taxon>
        <taxon>Pseudomonadati</taxon>
        <taxon>Thermomicrobiota</taxon>
        <taxon>Thermomicrobia</taxon>
        <taxon>Thermomicrobiales</taxon>
        <taxon>Thermomicrobiaceae</taxon>
        <taxon>Thermomicrobium</taxon>
    </lineage>
</organism>